<reference key="1">
    <citation type="journal article" date="2003" name="J. Bacteriol.">
        <title>Complete genome sequence of the ammonia-oxidizing bacterium and obligate chemolithoautotroph Nitrosomonas europaea.</title>
        <authorList>
            <person name="Chain P."/>
            <person name="Lamerdin J.E."/>
            <person name="Larimer F.W."/>
            <person name="Regala W."/>
            <person name="Lao V."/>
            <person name="Land M.L."/>
            <person name="Hauser L."/>
            <person name="Hooper A.B."/>
            <person name="Klotz M.G."/>
            <person name="Norton J."/>
            <person name="Sayavedra-Soto L.A."/>
            <person name="Arciero D.M."/>
            <person name="Hommes N.G."/>
            <person name="Whittaker M.M."/>
            <person name="Arp D.J."/>
        </authorList>
    </citation>
    <scope>NUCLEOTIDE SEQUENCE [LARGE SCALE GENOMIC DNA]</scope>
    <source>
        <strain>ATCC 19718 / CIP 103999 / KCTC 2705 / NBRC 14298</strain>
    </source>
</reference>
<organism>
    <name type="scientific">Nitrosomonas europaea (strain ATCC 19718 / CIP 103999 / KCTC 2705 / NBRC 14298)</name>
    <dbReference type="NCBI Taxonomy" id="228410"/>
    <lineage>
        <taxon>Bacteria</taxon>
        <taxon>Pseudomonadati</taxon>
        <taxon>Pseudomonadota</taxon>
        <taxon>Betaproteobacteria</taxon>
        <taxon>Nitrosomonadales</taxon>
        <taxon>Nitrosomonadaceae</taxon>
        <taxon>Nitrosomonas</taxon>
    </lineage>
</organism>
<feature type="chain" id="PRO_0000159911" description="3-dehydroquinate dehydratase">
    <location>
        <begin position="1"/>
        <end position="144"/>
    </location>
</feature>
<feature type="active site" description="Proton acceptor" evidence="1">
    <location>
        <position position="24"/>
    </location>
</feature>
<feature type="active site" description="Proton donor" evidence="1">
    <location>
        <position position="102"/>
    </location>
</feature>
<feature type="binding site" evidence="1">
    <location>
        <position position="76"/>
    </location>
    <ligand>
        <name>substrate</name>
    </ligand>
</feature>
<feature type="binding site" evidence="1">
    <location>
        <position position="82"/>
    </location>
    <ligand>
        <name>substrate</name>
    </ligand>
</feature>
<feature type="binding site" evidence="1">
    <location>
        <position position="89"/>
    </location>
    <ligand>
        <name>substrate</name>
    </ligand>
</feature>
<feature type="binding site" evidence="1">
    <location>
        <begin position="103"/>
        <end position="104"/>
    </location>
    <ligand>
        <name>substrate</name>
    </ligand>
</feature>
<feature type="binding site" evidence="1">
    <location>
        <position position="113"/>
    </location>
    <ligand>
        <name>substrate</name>
    </ligand>
</feature>
<feature type="site" description="Transition state stabilizer" evidence="1">
    <location>
        <position position="19"/>
    </location>
</feature>
<name>AROQ_NITEU</name>
<keyword id="KW-0028">Amino-acid biosynthesis</keyword>
<keyword id="KW-0057">Aromatic amino acid biosynthesis</keyword>
<keyword id="KW-0456">Lyase</keyword>
<keyword id="KW-1185">Reference proteome</keyword>
<comment type="function">
    <text evidence="1">Catalyzes a trans-dehydration via an enolate intermediate.</text>
</comment>
<comment type="catalytic activity">
    <reaction evidence="1">
        <text>3-dehydroquinate = 3-dehydroshikimate + H2O</text>
        <dbReference type="Rhea" id="RHEA:21096"/>
        <dbReference type="ChEBI" id="CHEBI:15377"/>
        <dbReference type="ChEBI" id="CHEBI:16630"/>
        <dbReference type="ChEBI" id="CHEBI:32364"/>
        <dbReference type="EC" id="4.2.1.10"/>
    </reaction>
</comment>
<comment type="pathway">
    <text evidence="1">Metabolic intermediate biosynthesis; chorismate biosynthesis; chorismate from D-erythrose 4-phosphate and phosphoenolpyruvate: step 3/7.</text>
</comment>
<comment type="subunit">
    <text evidence="1">Homododecamer.</text>
</comment>
<comment type="similarity">
    <text evidence="1">Belongs to the type-II 3-dehydroquinase family.</text>
</comment>
<comment type="sequence caution" evidence="2">
    <conflict type="erroneous initiation">
        <sequence resource="EMBL-CDS" id="CAD84562"/>
    </conflict>
</comment>
<gene>
    <name evidence="1" type="primary">aroQ</name>
    <name type="synonym">aroQ1</name>
    <name type="ordered locus">NE0651</name>
</gene>
<sequence length="144" mass="15493">MAANILVIHGPNLNLLGRREPAVYGQTTLEDINRNLTVKAQAAPVALSIFQSNAEHELIDRVQGAMSDGTDFIIINPAALTHTSIALRDALAATSLPFVEIHLSNVYARESFRRTSYFSDIAVGVISGLGAAGYELALQFALTR</sequence>
<accession>Q82WL9</accession>
<proteinExistence type="inferred from homology"/>
<evidence type="ECO:0000255" key="1">
    <source>
        <dbReference type="HAMAP-Rule" id="MF_00169"/>
    </source>
</evidence>
<evidence type="ECO:0000305" key="2"/>
<protein>
    <recommendedName>
        <fullName evidence="1">3-dehydroquinate dehydratase</fullName>
        <shortName evidence="1">3-dehydroquinase</shortName>
        <ecNumber evidence="1">4.2.1.10</ecNumber>
    </recommendedName>
    <alternativeName>
        <fullName evidence="1">Type II DHQase</fullName>
    </alternativeName>
</protein>
<dbReference type="EC" id="4.2.1.10" evidence="1"/>
<dbReference type="EMBL" id="AL954747">
    <property type="protein sequence ID" value="CAD84562.1"/>
    <property type="status" value="ALT_INIT"/>
    <property type="molecule type" value="Genomic_DNA"/>
</dbReference>
<dbReference type="RefSeq" id="WP_041357065.1">
    <property type="nucleotide sequence ID" value="NC_004757.1"/>
</dbReference>
<dbReference type="SMR" id="Q82WL9"/>
<dbReference type="STRING" id="228410.NE0651"/>
<dbReference type="GeneID" id="87103848"/>
<dbReference type="KEGG" id="neu:NE0651"/>
<dbReference type="eggNOG" id="COG0757">
    <property type="taxonomic scope" value="Bacteria"/>
</dbReference>
<dbReference type="HOGENOM" id="CLU_090968_1_0_4"/>
<dbReference type="OrthoDB" id="9790793at2"/>
<dbReference type="PhylomeDB" id="Q82WL9"/>
<dbReference type="UniPathway" id="UPA00053">
    <property type="reaction ID" value="UER00086"/>
</dbReference>
<dbReference type="Proteomes" id="UP000001416">
    <property type="component" value="Chromosome"/>
</dbReference>
<dbReference type="GO" id="GO:0003855">
    <property type="term" value="F:3-dehydroquinate dehydratase activity"/>
    <property type="evidence" value="ECO:0007669"/>
    <property type="project" value="UniProtKB-UniRule"/>
</dbReference>
<dbReference type="GO" id="GO:0008652">
    <property type="term" value="P:amino acid biosynthetic process"/>
    <property type="evidence" value="ECO:0007669"/>
    <property type="project" value="UniProtKB-KW"/>
</dbReference>
<dbReference type="GO" id="GO:0009073">
    <property type="term" value="P:aromatic amino acid family biosynthetic process"/>
    <property type="evidence" value="ECO:0007669"/>
    <property type="project" value="UniProtKB-KW"/>
</dbReference>
<dbReference type="GO" id="GO:0009423">
    <property type="term" value="P:chorismate biosynthetic process"/>
    <property type="evidence" value="ECO:0007669"/>
    <property type="project" value="UniProtKB-UniRule"/>
</dbReference>
<dbReference type="GO" id="GO:0019631">
    <property type="term" value="P:quinate catabolic process"/>
    <property type="evidence" value="ECO:0007669"/>
    <property type="project" value="TreeGrafter"/>
</dbReference>
<dbReference type="CDD" id="cd00466">
    <property type="entry name" value="DHQase_II"/>
    <property type="match status" value="1"/>
</dbReference>
<dbReference type="Gene3D" id="3.40.50.9100">
    <property type="entry name" value="Dehydroquinase, class II"/>
    <property type="match status" value="1"/>
</dbReference>
<dbReference type="HAMAP" id="MF_00169">
    <property type="entry name" value="AroQ"/>
    <property type="match status" value="1"/>
</dbReference>
<dbReference type="InterPro" id="IPR001874">
    <property type="entry name" value="DHquinase_II"/>
</dbReference>
<dbReference type="InterPro" id="IPR018509">
    <property type="entry name" value="DHquinase_II_CS"/>
</dbReference>
<dbReference type="InterPro" id="IPR036441">
    <property type="entry name" value="DHquinase_II_sf"/>
</dbReference>
<dbReference type="NCBIfam" id="TIGR01088">
    <property type="entry name" value="aroQ"/>
    <property type="match status" value="1"/>
</dbReference>
<dbReference type="NCBIfam" id="NF003804">
    <property type="entry name" value="PRK05395.1-1"/>
    <property type="match status" value="1"/>
</dbReference>
<dbReference type="NCBIfam" id="NF003805">
    <property type="entry name" value="PRK05395.1-2"/>
    <property type="match status" value="1"/>
</dbReference>
<dbReference type="NCBIfam" id="NF003806">
    <property type="entry name" value="PRK05395.1-3"/>
    <property type="match status" value="1"/>
</dbReference>
<dbReference type="NCBIfam" id="NF003807">
    <property type="entry name" value="PRK05395.1-4"/>
    <property type="match status" value="1"/>
</dbReference>
<dbReference type="PANTHER" id="PTHR21272">
    <property type="entry name" value="CATABOLIC 3-DEHYDROQUINASE"/>
    <property type="match status" value="1"/>
</dbReference>
<dbReference type="PANTHER" id="PTHR21272:SF3">
    <property type="entry name" value="CATABOLIC 3-DEHYDROQUINASE"/>
    <property type="match status" value="1"/>
</dbReference>
<dbReference type="Pfam" id="PF01220">
    <property type="entry name" value="DHquinase_II"/>
    <property type="match status" value="1"/>
</dbReference>
<dbReference type="PIRSF" id="PIRSF001399">
    <property type="entry name" value="DHquinase_II"/>
    <property type="match status" value="1"/>
</dbReference>
<dbReference type="SUPFAM" id="SSF52304">
    <property type="entry name" value="Type II 3-dehydroquinate dehydratase"/>
    <property type="match status" value="1"/>
</dbReference>
<dbReference type="PROSITE" id="PS01029">
    <property type="entry name" value="DEHYDROQUINASE_II"/>
    <property type="match status" value="1"/>
</dbReference>